<organism>
    <name type="scientific">Escherichia coli O45:K1 (strain S88 / ExPEC)</name>
    <dbReference type="NCBI Taxonomy" id="585035"/>
    <lineage>
        <taxon>Bacteria</taxon>
        <taxon>Pseudomonadati</taxon>
        <taxon>Pseudomonadota</taxon>
        <taxon>Gammaproteobacteria</taxon>
        <taxon>Enterobacterales</taxon>
        <taxon>Enterobacteriaceae</taxon>
        <taxon>Escherichia</taxon>
    </lineage>
</organism>
<feature type="chain" id="PRO_1000213056" description="NADPH-dependent 7-cyano-7-deazaguanine reductase">
    <location>
        <begin position="1"/>
        <end position="282"/>
    </location>
</feature>
<feature type="active site" description="Thioimide intermediate" evidence="1">
    <location>
        <position position="190"/>
    </location>
</feature>
<feature type="active site" description="Proton donor" evidence="1">
    <location>
        <position position="197"/>
    </location>
</feature>
<feature type="binding site" evidence="1">
    <location>
        <begin position="88"/>
        <end position="90"/>
    </location>
    <ligand>
        <name>substrate</name>
    </ligand>
</feature>
<feature type="binding site" evidence="1">
    <location>
        <begin position="90"/>
        <end position="91"/>
    </location>
    <ligand>
        <name>NADPH</name>
        <dbReference type="ChEBI" id="CHEBI:57783"/>
    </ligand>
</feature>
<feature type="binding site" evidence="1">
    <location>
        <begin position="229"/>
        <end position="230"/>
    </location>
    <ligand>
        <name>substrate</name>
    </ligand>
</feature>
<feature type="binding site" evidence="1">
    <location>
        <begin position="258"/>
        <end position="259"/>
    </location>
    <ligand>
        <name>NADPH</name>
        <dbReference type="ChEBI" id="CHEBI:57783"/>
    </ligand>
</feature>
<protein>
    <recommendedName>
        <fullName evidence="1">NADPH-dependent 7-cyano-7-deazaguanine reductase</fullName>
        <ecNumber evidence="1">1.7.1.13</ecNumber>
    </recommendedName>
    <alternativeName>
        <fullName evidence="1">7-cyano-7-carbaguanine reductase</fullName>
    </alternativeName>
    <alternativeName>
        <fullName evidence="1">NADPH-dependent nitrile oxidoreductase</fullName>
    </alternativeName>
    <alternativeName>
        <fullName evidence="1">PreQ(0) reductase</fullName>
    </alternativeName>
</protein>
<evidence type="ECO:0000255" key="1">
    <source>
        <dbReference type="HAMAP-Rule" id="MF_00817"/>
    </source>
</evidence>
<sequence>MSSYANHQALAGLTLGKSTDYRDTYDASLLQGVPRSLNRDPLGLKADNLPFHGTDIWTLYELSWLNAKGLPQVAVGHVELEYTSVNLIESKSFKLYLNSFNQTRFNNWDEVRQTLERDLSTCAQGKVSVALYRLDELEGQPIGHFNGTCIDDQDITIDNYEFTTDYLENATSGEKVVEETLVSHLLKSNCLITHQPDWGSIQIQYRGRQIDREKLLRYLVSFRHHNEFHEQCVERIFNDLLRFCQPEKLSVYARYTRRGGLDINPWRSNSDFVPSTTRLVRQ</sequence>
<reference key="1">
    <citation type="journal article" date="2009" name="PLoS Genet.">
        <title>Organised genome dynamics in the Escherichia coli species results in highly diverse adaptive paths.</title>
        <authorList>
            <person name="Touchon M."/>
            <person name="Hoede C."/>
            <person name="Tenaillon O."/>
            <person name="Barbe V."/>
            <person name="Baeriswyl S."/>
            <person name="Bidet P."/>
            <person name="Bingen E."/>
            <person name="Bonacorsi S."/>
            <person name="Bouchier C."/>
            <person name="Bouvet O."/>
            <person name="Calteau A."/>
            <person name="Chiapello H."/>
            <person name="Clermont O."/>
            <person name="Cruveiller S."/>
            <person name="Danchin A."/>
            <person name="Diard M."/>
            <person name="Dossat C."/>
            <person name="Karoui M.E."/>
            <person name="Frapy E."/>
            <person name="Garry L."/>
            <person name="Ghigo J.M."/>
            <person name="Gilles A.M."/>
            <person name="Johnson J."/>
            <person name="Le Bouguenec C."/>
            <person name="Lescat M."/>
            <person name="Mangenot S."/>
            <person name="Martinez-Jehanne V."/>
            <person name="Matic I."/>
            <person name="Nassif X."/>
            <person name="Oztas S."/>
            <person name="Petit M.A."/>
            <person name="Pichon C."/>
            <person name="Rouy Z."/>
            <person name="Ruf C.S."/>
            <person name="Schneider D."/>
            <person name="Tourret J."/>
            <person name="Vacherie B."/>
            <person name="Vallenet D."/>
            <person name="Medigue C."/>
            <person name="Rocha E.P.C."/>
            <person name="Denamur E."/>
        </authorList>
    </citation>
    <scope>NUCLEOTIDE SEQUENCE [LARGE SCALE GENOMIC DNA]</scope>
    <source>
        <strain>S88 / ExPEC</strain>
    </source>
</reference>
<proteinExistence type="inferred from homology"/>
<keyword id="KW-0963">Cytoplasm</keyword>
<keyword id="KW-0521">NADP</keyword>
<keyword id="KW-0560">Oxidoreductase</keyword>
<keyword id="KW-0671">Queuosine biosynthesis</keyword>
<keyword id="KW-1185">Reference proteome</keyword>
<name>QUEF_ECO45</name>
<accession>B7MLB5</accession>
<comment type="function">
    <text evidence="1">Catalyzes the NADPH-dependent reduction of 7-cyano-7-deazaguanine (preQ0) to 7-aminomethyl-7-deazaguanine (preQ1).</text>
</comment>
<comment type="catalytic activity">
    <reaction evidence="1">
        <text>7-aminomethyl-7-carbaguanine + 2 NADP(+) = 7-cyano-7-deazaguanine + 2 NADPH + 3 H(+)</text>
        <dbReference type="Rhea" id="RHEA:13409"/>
        <dbReference type="ChEBI" id="CHEBI:15378"/>
        <dbReference type="ChEBI" id="CHEBI:45075"/>
        <dbReference type="ChEBI" id="CHEBI:57783"/>
        <dbReference type="ChEBI" id="CHEBI:58349"/>
        <dbReference type="ChEBI" id="CHEBI:58703"/>
        <dbReference type="EC" id="1.7.1.13"/>
    </reaction>
</comment>
<comment type="pathway">
    <text evidence="1">tRNA modification; tRNA-queuosine biosynthesis.</text>
</comment>
<comment type="subunit">
    <text evidence="1">Homodimer.</text>
</comment>
<comment type="subcellular location">
    <subcellularLocation>
        <location evidence="1">Cytoplasm</location>
    </subcellularLocation>
</comment>
<comment type="similarity">
    <text evidence="1">Belongs to the GTP cyclohydrolase I family. QueF type 2 subfamily.</text>
</comment>
<dbReference type="EC" id="1.7.1.13" evidence="1"/>
<dbReference type="EMBL" id="CU928161">
    <property type="protein sequence ID" value="CAR04304.1"/>
    <property type="molecule type" value="Genomic_DNA"/>
</dbReference>
<dbReference type="RefSeq" id="WP_000100433.1">
    <property type="nucleotide sequence ID" value="NC_011742.1"/>
</dbReference>
<dbReference type="SMR" id="B7MLB5"/>
<dbReference type="KEGG" id="ecz:ECS88_3063"/>
<dbReference type="HOGENOM" id="CLU_054738_0_0_6"/>
<dbReference type="UniPathway" id="UPA00392"/>
<dbReference type="Proteomes" id="UP000000747">
    <property type="component" value="Chromosome"/>
</dbReference>
<dbReference type="GO" id="GO:0005737">
    <property type="term" value="C:cytoplasm"/>
    <property type="evidence" value="ECO:0007669"/>
    <property type="project" value="UniProtKB-SubCell"/>
</dbReference>
<dbReference type="GO" id="GO:0033739">
    <property type="term" value="F:preQ1 synthase activity"/>
    <property type="evidence" value="ECO:0007669"/>
    <property type="project" value="UniProtKB-UniRule"/>
</dbReference>
<dbReference type="GO" id="GO:0008616">
    <property type="term" value="P:queuosine biosynthetic process"/>
    <property type="evidence" value="ECO:0007669"/>
    <property type="project" value="UniProtKB-UniRule"/>
</dbReference>
<dbReference type="GO" id="GO:0006400">
    <property type="term" value="P:tRNA modification"/>
    <property type="evidence" value="ECO:0007669"/>
    <property type="project" value="UniProtKB-UniRule"/>
</dbReference>
<dbReference type="FunFam" id="3.30.1130.10:FF:000004">
    <property type="entry name" value="NADPH-dependent 7-cyano-7-deazaguanine reductase"/>
    <property type="match status" value="1"/>
</dbReference>
<dbReference type="FunFam" id="3.30.1130.10:FF:000006">
    <property type="entry name" value="NADPH-dependent 7-cyano-7-deazaguanine reductase"/>
    <property type="match status" value="1"/>
</dbReference>
<dbReference type="Gene3D" id="3.30.1130.10">
    <property type="match status" value="2"/>
</dbReference>
<dbReference type="HAMAP" id="MF_00817">
    <property type="entry name" value="QueF_type2"/>
    <property type="match status" value="1"/>
</dbReference>
<dbReference type="InterPro" id="IPR043133">
    <property type="entry name" value="GTP-CH-I_C/QueF"/>
</dbReference>
<dbReference type="InterPro" id="IPR050084">
    <property type="entry name" value="NADPH_dep_7-cyano-7-deazaG_red"/>
</dbReference>
<dbReference type="InterPro" id="IPR029500">
    <property type="entry name" value="QueF"/>
</dbReference>
<dbReference type="InterPro" id="IPR029139">
    <property type="entry name" value="QueF_N"/>
</dbReference>
<dbReference type="InterPro" id="IPR016428">
    <property type="entry name" value="QueF_type2"/>
</dbReference>
<dbReference type="NCBIfam" id="TIGR03138">
    <property type="entry name" value="QueF"/>
    <property type="match status" value="1"/>
</dbReference>
<dbReference type="PANTHER" id="PTHR34354">
    <property type="entry name" value="NADPH-DEPENDENT 7-CYANO-7-DEAZAGUANINE REDUCTASE"/>
    <property type="match status" value="1"/>
</dbReference>
<dbReference type="PANTHER" id="PTHR34354:SF1">
    <property type="entry name" value="NADPH-DEPENDENT 7-CYANO-7-DEAZAGUANINE REDUCTASE"/>
    <property type="match status" value="1"/>
</dbReference>
<dbReference type="Pfam" id="PF14489">
    <property type="entry name" value="QueF"/>
    <property type="match status" value="1"/>
</dbReference>
<dbReference type="Pfam" id="PF14819">
    <property type="entry name" value="QueF_N"/>
    <property type="match status" value="1"/>
</dbReference>
<dbReference type="PIRSF" id="PIRSF004750">
    <property type="entry name" value="Nitrile_oxidored_YqcD_prd"/>
    <property type="match status" value="1"/>
</dbReference>
<dbReference type="SUPFAM" id="SSF55620">
    <property type="entry name" value="Tetrahydrobiopterin biosynthesis enzymes-like"/>
    <property type="match status" value="1"/>
</dbReference>
<gene>
    <name evidence="1" type="primary">queF</name>
    <name type="ordered locus">ECS88_3063</name>
</gene>